<name>IL27B_MOUSE</name>
<organism>
    <name type="scientific">Mus musculus</name>
    <name type="common">Mouse</name>
    <dbReference type="NCBI Taxonomy" id="10090"/>
    <lineage>
        <taxon>Eukaryota</taxon>
        <taxon>Metazoa</taxon>
        <taxon>Chordata</taxon>
        <taxon>Craniata</taxon>
        <taxon>Vertebrata</taxon>
        <taxon>Euteleostomi</taxon>
        <taxon>Mammalia</taxon>
        <taxon>Eutheria</taxon>
        <taxon>Euarchontoglires</taxon>
        <taxon>Glires</taxon>
        <taxon>Rodentia</taxon>
        <taxon>Myomorpha</taxon>
        <taxon>Muroidea</taxon>
        <taxon>Muridae</taxon>
        <taxon>Murinae</taxon>
        <taxon>Mus</taxon>
        <taxon>Mus</taxon>
    </lineage>
</organism>
<evidence type="ECO:0000250" key="1">
    <source>
        <dbReference type="UniProtKB" id="Q14213"/>
    </source>
</evidence>
<evidence type="ECO:0000255" key="2"/>
<evidence type="ECO:0000255" key="3">
    <source>
        <dbReference type="PROSITE-ProRule" id="PRU00316"/>
    </source>
</evidence>
<evidence type="ECO:0000305" key="4"/>
<evidence type="ECO:0007829" key="5">
    <source>
        <dbReference type="PDB" id="7ZG0"/>
    </source>
</evidence>
<comment type="function">
    <text>Associates with IL27 to form the IL-27 interleukin, a heterodimeric cytokine which functions in innate immunity. IL-27 has pro- and anti-inflammatory properties, that can regulate T-helper cell development, suppress T-cell proliferation, stimulate cytotoxic T-cell activity, induce isotype switching in B-cells, and that has diverse effects on innate immune cells. Among its target cells are CD4 T-helper cells which can differentiate in type 1 effector cells (TH1), type 2 effector cells (TH2) and IL17 producing helper T-cells (TH17). It drives rapid clonal expansion of naive but not memory CD4 T-cells. It also strongly synergizes with IL-12 to trigger interferon-gamma/IFN-gamma production of naive CD4 T-cells, binds to the cytokine receptor WSX-1/TCCR. Another important role of IL-27 is its antitumor activity as well as its antiangiogenic activity with activation of production of antiangiogenic chemokines.</text>
</comment>
<comment type="subunit">
    <text evidence="1">Heterodimer with IL27/IL27A; not disulfide-linked. This heterodimer is known as interleukin IL-27. Heterodimer with IL12A; not disulfide-linked. This heterodimer is known as interleukin IL-35. Interacts with SQSTM1.</text>
</comment>
<comment type="interaction">
    <interactant intactId="EBI-3862967">
        <id>O35228</id>
    </interactant>
    <interactant intactId="EBI-3862959">
        <id>P43431</id>
        <label>Il12a</label>
    </interactant>
    <organismsDiffer>false</organismsDiffer>
    <experiments>2</experiments>
</comment>
<comment type="subcellular location">
    <subcellularLocation>
        <location evidence="1">Secreted</location>
    </subcellularLocation>
</comment>
<comment type="similarity">
    <text evidence="4">Belongs to the type I cytokine receptor family. Type 3 subfamily.</text>
</comment>
<protein>
    <recommendedName>
        <fullName>Interleukin-27 subunit beta</fullName>
        <shortName>IL-27 subunit beta</shortName>
        <shortName>IL-27B</shortName>
    </recommendedName>
    <alternativeName>
        <fullName>Epstein-Barr virus-induced gene 3 protein homolog</fullName>
    </alternativeName>
</protein>
<gene>
    <name type="primary">Ebi3</name>
    <name type="synonym">Il27b</name>
</gene>
<feature type="signal peptide" evidence="2">
    <location>
        <begin position="1"/>
        <end position="18"/>
    </location>
</feature>
<feature type="chain" id="PRO_0000010938" description="Interleukin-27 subunit beta">
    <location>
        <begin position="19"/>
        <end position="228"/>
    </location>
</feature>
<feature type="domain" description="Fibronectin type-III 1" evidence="3">
    <location>
        <begin position="26"/>
        <end position="124"/>
    </location>
</feature>
<feature type="domain" description="Fibronectin type-III 2" evidence="3">
    <location>
        <begin position="127"/>
        <end position="224"/>
    </location>
</feature>
<feature type="glycosylation site" description="N-linked (GlcNAc...) asparagine" evidence="2">
    <location>
        <position position="54"/>
    </location>
</feature>
<feature type="glycosylation site" description="N-linked (GlcNAc...) asparagine" evidence="2">
    <location>
        <position position="104"/>
    </location>
</feature>
<feature type="strand" evidence="5">
    <location>
        <begin position="32"/>
        <end position="38"/>
    </location>
</feature>
<feature type="turn" evidence="5">
    <location>
        <begin position="39"/>
        <end position="41"/>
    </location>
</feature>
<feature type="strand" evidence="5">
    <location>
        <begin position="42"/>
        <end position="47"/>
    </location>
</feature>
<feature type="strand" evidence="5">
    <location>
        <begin position="60"/>
        <end position="69"/>
    </location>
</feature>
<feature type="strand" evidence="5">
    <location>
        <begin position="86"/>
        <end position="92"/>
    </location>
</feature>
<feature type="strand" evidence="5">
    <location>
        <begin position="101"/>
        <end position="109"/>
    </location>
</feature>
<feature type="strand" evidence="5">
    <location>
        <begin position="112"/>
        <end position="120"/>
    </location>
</feature>
<feature type="helix" evidence="5">
    <location>
        <begin position="122"/>
        <end position="125"/>
    </location>
</feature>
<feature type="strand" evidence="5">
    <location>
        <begin position="132"/>
        <end position="139"/>
    </location>
</feature>
<feature type="strand" evidence="5">
    <location>
        <begin position="142"/>
        <end position="148"/>
    </location>
</feature>
<feature type="turn" evidence="5">
    <location>
        <begin position="156"/>
        <end position="158"/>
    </location>
</feature>
<feature type="strand" evidence="5">
    <location>
        <begin position="161"/>
        <end position="169"/>
    </location>
</feature>
<feature type="strand" evidence="5">
    <location>
        <begin position="176"/>
        <end position="192"/>
    </location>
</feature>
<feature type="strand" evidence="5">
    <location>
        <begin position="197"/>
        <end position="205"/>
    </location>
</feature>
<reference key="1">
    <citation type="submission" date="1997-07" db="EMBL/GenBank/DDBJ databases">
        <title>Mouse homolog of human Epstein-Barr virus-induced gene 3 (EBI3).</title>
        <authorList>
            <person name="Nomura H."/>
            <person name="Yaguchi N."/>
            <person name="Hanyuu C."/>
            <person name="Maeda M."/>
            <person name="Kikuchi Y."/>
            <person name="Nakata Y."/>
            <person name="Kojima T."/>
            <person name="Tulin E.E."/>
            <person name="Hasegawa M."/>
        </authorList>
    </citation>
    <scope>NUCLEOTIDE SEQUENCE [MRNA]</scope>
    <source>
        <tissue>Embryo</tissue>
    </source>
</reference>
<reference key="2">
    <citation type="journal article" date="2004" name="Genome Res.">
        <title>The status, quality, and expansion of the NIH full-length cDNA project: the Mammalian Gene Collection (MGC).</title>
        <authorList>
            <consortium name="The MGC Project Team"/>
        </authorList>
    </citation>
    <scope>NUCLEOTIDE SEQUENCE [LARGE SCALE MRNA]</scope>
    <source>
        <tissue>Mammary tumor</tissue>
    </source>
</reference>
<reference key="3">
    <citation type="journal article" date="2007" name="J. Mol. Med.">
        <title>The biology and therapeutic potential of interleukin 27.</title>
        <authorList>
            <person name="Batten M."/>
            <person name="Ghilardi N."/>
        </authorList>
    </citation>
    <scope>REVIEW</scope>
</reference>
<dbReference type="EMBL" id="AF013114">
    <property type="protein sequence ID" value="AAB67115.1"/>
    <property type="molecule type" value="mRNA"/>
</dbReference>
<dbReference type="EMBL" id="BC008209">
    <property type="protein sequence ID" value="AAH08209.1"/>
    <property type="molecule type" value="mRNA"/>
</dbReference>
<dbReference type="CCDS" id="CCDS28888.1"/>
<dbReference type="RefSeq" id="NP_056581.1">
    <property type="nucleotide sequence ID" value="NM_015766.2"/>
</dbReference>
<dbReference type="PDB" id="7Z0L">
    <property type="method" value="EM"/>
    <property type="resolution" value="4.00 A"/>
    <property type="chains" value="B=19-228"/>
</dbReference>
<dbReference type="PDB" id="7ZG0">
    <property type="method" value="X-ray"/>
    <property type="resolution" value="3.18 A"/>
    <property type="chains" value="C/D=18-228"/>
</dbReference>
<dbReference type="PDBsum" id="7Z0L"/>
<dbReference type="PDBsum" id="7ZG0"/>
<dbReference type="SMR" id="O35228"/>
<dbReference type="BioGRID" id="206044">
    <property type="interactions" value="2"/>
</dbReference>
<dbReference type="DIP" id="DIP-60364N"/>
<dbReference type="FunCoup" id="O35228">
    <property type="interactions" value="316"/>
</dbReference>
<dbReference type="IntAct" id="O35228">
    <property type="interactions" value="1"/>
</dbReference>
<dbReference type="STRING" id="10090.ENSMUSP00000003274"/>
<dbReference type="GlyCosmos" id="O35228">
    <property type="glycosylation" value="2 sites, No reported glycans"/>
</dbReference>
<dbReference type="GlyGen" id="O35228">
    <property type="glycosylation" value="2 sites"/>
</dbReference>
<dbReference type="PaxDb" id="10090-ENSMUSP00000003274"/>
<dbReference type="PeptideAtlas" id="O35228"/>
<dbReference type="ProteomicsDB" id="269393"/>
<dbReference type="Antibodypedia" id="23527">
    <property type="antibodies" value="1125 antibodies from 41 providers"/>
</dbReference>
<dbReference type="DNASU" id="50498"/>
<dbReference type="Ensembl" id="ENSMUST00000003274.8">
    <property type="protein sequence ID" value="ENSMUSP00000003274.7"/>
    <property type="gene ID" value="ENSMUSG00000003206.8"/>
</dbReference>
<dbReference type="GeneID" id="50498"/>
<dbReference type="KEGG" id="mmu:50498"/>
<dbReference type="UCSC" id="uc008daj.1">
    <property type="organism name" value="mouse"/>
</dbReference>
<dbReference type="AGR" id="MGI:1354171"/>
<dbReference type="CTD" id="10148"/>
<dbReference type="MGI" id="MGI:1354171">
    <property type="gene designation" value="Ebi3"/>
</dbReference>
<dbReference type="VEuPathDB" id="HostDB:ENSMUSG00000003206"/>
<dbReference type="eggNOG" id="ENOG502RXJ4">
    <property type="taxonomic scope" value="Eukaryota"/>
</dbReference>
<dbReference type="GeneTree" id="ENSGT00940000160050"/>
<dbReference type="HOGENOM" id="CLU_047259_2_0_1"/>
<dbReference type="InParanoid" id="O35228"/>
<dbReference type="OMA" id="FQVCAKE"/>
<dbReference type="OrthoDB" id="6381660at2759"/>
<dbReference type="PhylomeDB" id="O35228"/>
<dbReference type="TreeFam" id="TF331210"/>
<dbReference type="Reactome" id="R-MMU-8984722">
    <property type="pathway name" value="Interleukin-35 Signalling"/>
</dbReference>
<dbReference type="Reactome" id="R-MMU-9020956">
    <property type="pathway name" value="Interleukin-27 signaling"/>
</dbReference>
<dbReference type="BioGRID-ORCS" id="50498">
    <property type="hits" value="3 hits in 77 CRISPR screens"/>
</dbReference>
<dbReference type="PRO" id="PR:O35228"/>
<dbReference type="Proteomes" id="UP000000589">
    <property type="component" value="Chromosome 17"/>
</dbReference>
<dbReference type="RNAct" id="O35228">
    <property type="molecule type" value="protein"/>
</dbReference>
<dbReference type="Bgee" id="ENSMUSG00000003206">
    <property type="expression patterns" value="Expressed in granulocyte and 113 other cell types or tissues"/>
</dbReference>
<dbReference type="ExpressionAtlas" id="O35228">
    <property type="expression patterns" value="baseline and differential"/>
</dbReference>
<dbReference type="GO" id="GO:0005615">
    <property type="term" value="C:extracellular space"/>
    <property type="evidence" value="ECO:0007669"/>
    <property type="project" value="UniProtKB-KW"/>
</dbReference>
<dbReference type="GO" id="GO:0016020">
    <property type="term" value="C:membrane"/>
    <property type="evidence" value="ECO:0007669"/>
    <property type="project" value="InterPro"/>
</dbReference>
<dbReference type="GO" id="GO:0005125">
    <property type="term" value="F:cytokine activity"/>
    <property type="evidence" value="ECO:0007669"/>
    <property type="project" value="UniProtKB-KW"/>
</dbReference>
<dbReference type="GO" id="GO:0004896">
    <property type="term" value="F:cytokine receptor activity"/>
    <property type="evidence" value="ECO:0007669"/>
    <property type="project" value="Ensembl"/>
</dbReference>
<dbReference type="GO" id="GO:0045523">
    <property type="term" value="F:interleukin-27 receptor binding"/>
    <property type="evidence" value="ECO:0000314"/>
    <property type="project" value="MGI"/>
</dbReference>
<dbReference type="GO" id="GO:0042098">
    <property type="term" value="P:T cell proliferation"/>
    <property type="evidence" value="ECO:0000314"/>
    <property type="project" value="CACAO"/>
</dbReference>
<dbReference type="CDD" id="cd00063">
    <property type="entry name" value="FN3"/>
    <property type="match status" value="1"/>
</dbReference>
<dbReference type="FunFam" id="2.60.40.10:FF:000136">
    <property type="entry name" value="Ciliary neurotrophic factor receptor alpha"/>
    <property type="match status" value="1"/>
</dbReference>
<dbReference type="FunFam" id="2.60.40.10:FF:001499">
    <property type="entry name" value="Interleukin-27 subunit beta"/>
    <property type="match status" value="1"/>
</dbReference>
<dbReference type="Gene3D" id="2.60.40.10">
    <property type="entry name" value="Immunoglobulins"/>
    <property type="match status" value="2"/>
</dbReference>
<dbReference type="InterPro" id="IPR003961">
    <property type="entry name" value="FN3_dom"/>
</dbReference>
<dbReference type="InterPro" id="IPR056621">
    <property type="entry name" value="FN3_IL27B_N"/>
</dbReference>
<dbReference type="InterPro" id="IPR036116">
    <property type="entry name" value="FN3_sf"/>
</dbReference>
<dbReference type="InterPro" id="IPR003530">
    <property type="entry name" value="Hematopoietin_rcpt_L_F3_CS"/>
</dbReference>
<dbReference type="InterPro" id="IPR013783">
    <property type="entry name" value="Ig-like_fold"/>
</dbReference>
<dbReference type="InterPro" id="IPR053073">
    <property type="entry name" value="IL11/IL27_subunit_beta"/>
</dbReference>
<dbReference type="PANTHER" id="PTHR48483">
    <property type="entry name" value="INTERLEUKIN-27 SUBUNIT BETA"/>
    <property type="match status" value="1"/>
</dbReference>
<dbReference type="PANTHER" id="PTHR48483:SF2">
    <property type="entry name" value="INTERLEUKIN-27 SUBUNIT BETA"/>
    <property type="match status" value="1"/>
</dbReference>
<dbReference type="Pfam" id="PF00041">
    <property type="entry name" value="fn3"/>
    <property type="match status" value="1"/>
</dbReference>
<dbReference type="Pfam" id="PF24031">
    <property type="entry name" value="FN3_IL27B_N"/>
    <property type="match status" value="1"/>
</dbReference>
<dbReference type="SMART" id="SM00060">
    <property type="entry name" value="FN3"/>
    <property type="match status" value="1"/>
</dbReference>
<dbReference type="SUPFAM" id="SSF49265">
    <property type="entry name" value="Fibronectin type III"/>
    <property type="match status" value="2"/>
</dbReference>
<dbReference type="PROSITE" id="PS50853">
    <property type="entry name" value="FN3"/>
    <property type="match status" value="2"/>
</dbReference>
<dbReference type="PROSITE" id="PS01354">
    <property type="entry name" value="HEMATOPO_REC_L_F3"/>
    <property type="match status" value="1"/>
</dbReference>
<accession>O35228</accession>
<keyword id="KW-0002">3D-structure</keyword>
<keyword id="KW-0202">Cytokine</keyword>
<keyword id="KW-0325">Glycoprotein</keyword>
<keyword id="KW-1185">Reference proteome</keyword>
<keyword id="KW-0677">Repeat</keyword>
<keyword id="KW-0964">Secreted</keyword>
<keyword id="KW-0732">Signal</keyword>
<proteinExistence type="evidence at protein level"/>
<sequence>MSKLLFLSLALWASRSPGYTETALVALSQPRVQCHASRYPVAVDCSWTPLQAPNSTRSTSFIATYRLGVATQQQSQPCLQRSPQASRCTIPDVHLFSTVPYMLNVTAVHPGGASSSLLAFVAERIIKPDPPEGVRLRTAGQRLQVLWHPPASWPFPDIFSLKYRLRYRRRGASHFRQVGPIEATTFTLRNSKPHAKYCIQVSAQDLTDYGKPSDWSLPGQVESAPHKP</sequence>